<proteinExistence type="inferred from homology"/>
<reference key="1">
    <citation type="journal article" date="2000" name="Nucleic Acids Res.">
        <title>Complete genome sequence of the alkaliphilic bacterium Bacillus halodurans and genomic sequence comparison with Bacillus subtilis.</title>
        <authorList>
            <person name="Takami H."/>
            <person name="Nakasone K."/>
            <person name="Takaki Y."/>
            <person name="Maeno G."/>
            <person name="Sasaki R."/>
            <person name="Masui N."/>
            <person name="Fuji F."/>
            <person name="Hirama C."/>
            <person name="Nakamura Y."/>
            <person name="Ogasawara N."/>
            <person name="Kuhara S."/>
            <person name="Horikoshi K."/>
        </authorList>
    </citation>
    <scope>NUCLEOTIDE SEQUENCE [LARGE SCALE GENOMIC DNA]</scope>
    <source>
        <strain>ATCC BAA-125 / DSM 18197 / FERM 7344 / JCM 9153 / C-125</strain>
    </source>
</reference>
<evidence type="ECO:0000255" key="1">
    <source>
        <dbReference type="HAMAP-Rule" id="MF_00336"/>
    </source>
</evidence>
<name>BIOD_HALH5</name>
<gene>
    <name evidence="1" type="primary">bioD</name>
    <name type="ordered locus">BH0783</name>
</gene>
<organism>
    <name type="scientific">Halalkalibacterium halodurans (strain ATCC BAA-125 / DSM 18197 / FERM 7344 / JCM 9153 / C-125)</name>
    <name type="common">Bacillus halodurans</name>
    <dbReference type="NCBI Taxonomy" id="272558"/>
    <lineage>
        <taxon>Bacteria</taxon>
        <taxon>Bacillati</taxon>
        <taxon>Bacillota</taxon>
        <taxon>Bacilli</taxon>
        <taxon>Bacillales</taxon>
        <taxon>Bacillaceae</taxon>
        <taxon>Halalkalibacterium (ex Joshi et al. 2022)</taxon>
    </lineage>
</organism>
<accession>Q9KER6</accession>
<keyword id="KW-0067">ATP-binding</keyword>
<keyword id="KW-0093">Biotin biosynthesis</keyword>
<keyword id="KW-0963">Cytoplasm</keyword>
<keyword id="KW-0436">Ligase</keyword>
<keyword id="KW-0460">Magnesium</keyword>
<keyword id="KW-0479">Metal-binding</keyword>
<keyword id="KW-0547">Nucleotide-binding</keyword>
<keyword id="KW-1185">Reference proteome</keyword>
<comment type="function">
    <text evidence="1">Catalyzes a mechanistically unusual reaction, the ATP-dependent insertion of CO2 between the N7 and N8 nitrogen atoms of 7,8-diaminopelargonic acid (DAPA, also called 7,8-diammoniononanoate) to form a ureido ring.</text>
</comment>
<comment type="catalytic activity">
    <reaction evidence="1">
        <text>(7R,8S)-7,8-diammoniononanoate + CO2 + ATP = (4R,5S)-dethiobiotin + ADP + phosphate + 3 H(+)</text>
        <dbReference type="Rhea" id="RHEA:15805"/>
        <dbReference type="ChEBI" id="CHEBI:15378"/>
        <dbReference type="ChEBI" id="CHEBI:16526"/>
        <dbReference type="ChEBI" id="CHEBI:30616"/>
        <dbReference type="ChEBI" id="CHEBI:43474"/>
        <dbReference type="ChEBI" id="CHEBI:149469"/>
        <dbReference type="ChEBI" id="CHEBI:149473"/>
        <dbReference type="ChEBI" id="CHEBI:456216"/>
        <dbReference type="EC" id="6.3.3.3"/>
    </reaction>
</comment>
<comment type="cofactor">
    <cofactor evidence="1">
        <name>Mg(2+)</name>
        <dbReference type="ChEBI" id="CHEBI:18420"/>
    </cofactor>
</comment>
<comment type="pathway">
    <text evidence="1">Cofactor biosynthesis; biotin biosynthesis; biotin from 7,8-diaminononanoate: step 1/2.</text>
</comment>
<comment type="subunit">
    <text evidence="1">Homodimer.</text>
</comment>
<comment type="subcellular location">
    <subcellularLocation>
        <location evidence="1">Cytoplasm</location>
    </subcellularLocation>
</comment>
<comment type="similarity">
    <text evidence="1">Belongs to the dethiobiotin synthetase family.</text>
</comment>
<dbReference type="EC" id="6.3.3.3" evidence="1"/>
<dbReference type="EMBL" id="BA000004">
    <property type="protein sequence ID" value="BAB04502.1"/>
    <property type="molecule type" value="Genomic_DNA"/>
</dbReference>
<dbReference type="PIR" id="G83747">
    <property type="entry name" value="G83747"/>
</dbReference>
<dbReference type="SMR" id="Q9KER6"/>
<dbReference type="STRING" id="272558.gene:10726657"/>
<dbReference type="KEGG" id="bha:BH0783"/>
<dbReference type="eggNOG" id="COG0132">
    <property type="taxonomic scope" value="Bacteria"/>
</dbReference>
<dbReference type="HOGENOM" id="CLU_072551_3_0_9"/>
<dbReference type="UniPathway" id="UPA00078">
    <property type="reaction ID" value="UER00161"/>
</dbReference>
<dbReference type="Proteomes" id="UP000001258">
    <property type="component" value="Chromosome"/>
</dbReference>
<dbReference type="GO" id="GO:0005829">
    <property type="term" value="C:cytosol"/>
    <property type="evidence" value="ECO:0007669"/>
    <property type="project" value="TreeGrafter"/>
</dbReference>
<dbReference type="GO" id="GO:0005524">
    <property type="term" value="F:ATP binding"/>
    <property type="evidence" value="ECO:0007669"/>
    <property type="project" value="UniProtKB-UniRule"/>
</dbReference>
<dbReference type="GO" id="GO:0004141">
    <property type="term" value="F:dethiobiotin synthase activity"/>
    <property type="evidence" value="ECO:0007669"/>
    <property type="project" value="UniProtKB-UniRule"/>
</dbReference>
<dbReference type="GO" id="GO:0000287">
    <property type="term" value="F:magnesium ion binding"/>
    <property type="evidence" value="ECO:0007669"/>
    <property type="project" value="UniProtKB-UniRule"/>
</dbReference>
<dbReference type="GO" id="GO:0009102">
    <property type="term" value="P:biotin biosynthetic process"/>
    <property type="evidence" value="ECO:0007669"/>
    <property type="project" value="UniProtKB-UniRule"/>
</dbReference>
<dbReference type="CDD" id="cd03109">
    <property type="entry name" value="DTBS"/>
    <property type="match status" value="1"/>
</dbReference>
<dbReference type="FunFam" id="3.40.50.300:FF:000292">
    <property type="entry name" value="ATP-dependent dethiobiotin synthetase BioD"/>
    <property type="match status" value="1"/>
</dbReference>
<dbReference type="Gene3D" id="3.40.50.300">
    <property type="entry name" value="P-loop containing nucleotide triphosphate hydrolases"/>
    <property type="match status" value="1"/>
</dbReference>
<dbReference type="HAMAP" id="MF_00336">
    <property type="entry name" value="BioD"/>
    <property type="match status" value="1"/>
</dbReference>
<dbReference type="InterPro" id="IPR004472">
    <property type="entry name" value="DTB_synth_BioD"/>
</dbReference>
<dbReference type="InterPro" id="IPR027417">
    <property type="entry name" value="P-loop_NTPase"/>
</dbReference>
<dbReference type="NCBIfam" id="TIGR00347">
    <property type="entry name" value="bioD"/>
    <property type="match status" value="1"/>
</dbReference>
<dbReference type="PANTHER" id="PTHR43210:SF2">
    <property type="entry name" value="ATP-DEPENDENT DETHIOBIOTIN SYNTHETASE BIOD 2"/>
    <property type="match status" value="1"/>
</dbReference>
<dbReference type="PANTHER" id="PTHR43210">
    <property type="entry name" value="DETHIOBIOTIN SYNTHETASE"/>
    <property type="match status" value="1"/>
</dbReference>
<dbReference type="Pfam" id="PF13500">
    <property type="entry name" value="AAA_26"/>
    <property type="match status" value="1"/>
</dbReference>
<dbReference type="PIRSF" id="PIRSF006755">
    <property type="entry name" value="DTB_synth"/>
    <property type="match status" value="1"/>
</dbReference>
<dbReference type="SUPFAM" id="SSF52540">
    <property type="entry name" value="P-loop containing nucleoside triphosphate hydrolases"/>
    <property type="match status" value="1"/>
</dbReference>
<feature type="chain" id="PRO_0000187946" description="ATP-dependent dethiobiotin synthetase BioD">
    <location>
        <begin position="1"/>
        <end position="242"/>
    </location>
</feature>
<feature type="active site" evidence="1">
    <location>
        <position position="40"/>
    </location>
</feature>
<feature type="binding site" evidence="1">
    <location>
        <begin position="15"/>
        <end position="20"/>
    </location>
    <ligand>
        <name>ATP</name>
        <dbReference type="ChEBI" id="CHEBI:30616"/>
    </ligand>
</feature>
<feature type="binding site" evidence="1">
    <location>
        <position position="19"/>
    </location>
    <ligand>
        <name>Mg(2+)</name>
        <dbReference type="ChEBI" id="CHEBI:18420"/>
    </ligand>
</feature>
<feature type="binding site" evidence="1">
    <location>
        <position position="44"/>
    </location>
    <ligand>
        <name>substrate</name>
    </ligand>
</feature>
<feature type="binding site" evidence="1">
    <location>
        <begin position="117"/>
        <end position="120"/>
    </location>
    <ligand>
        <name>ATP</name>
        <dbReference type="ChEBI" id="CHEBI:30616"/>
    </ligand>
</feature>
<feature type="binding site" evidence="1">
    <location>
        <position position="117"/>
    </location>
    <ligand>
        <name>Mg(2+)</name>
        <dbReference type="ChEBI" id="CHEBI:18420"/>
    </ligand>
</feature>
<feature type="binding site" evidence="1">
    <location>
        <begin position="178"/>
        <end position="179"/>
    </location>
    <ligand>
        <name>ATP</name>
        <dbReference type="ChEBI" id="CHEBI:30616"/>
    </ligand>
</feature>
<feature type="binding site" evidence="1">
    <location>
        <begin position="208"/>
        <end position="210"/>
    </location>
    <ligand>
        <name>ATP</name>
        <dbReference type="ChEBI" id="CHEBI:30616"/>
    </ligand>
</feature>
<sequence>MVIIRSFFITGTDTDVGKTVVTSLLTRFLIDMGVNAFPYKPVQSGATTNGARMIPSDAQMYQLVRPEFDVTDFNTYLLEKPCSPHLAADLANITLDRTVITKQVHQLEEAHDAVLIEGAGGLYVPLTNDGYCYIDFMEELNVPTILVSALRVGTINHTVLSIEAMKARNLPIAGIIFNQLQIGNPVIEQSNVETIRKLTDTPILGFVPYSPDIHTVLADDKLRRHLYKDWDKRRFKELIHSD</sequence>
<protein>
    <recommendedName>
        <fullName evidence="1">ATP-dependent dethiobiotin synthetase BioD</fullName>
        <ecNumber evidence="1">6.3.3.3</ecNumber>
    </recommendedName>
    <alternativeName>
        <fullName evidence="1">DTB synthetase</fullName>
        <shortName evidence="1">DTBS</shortName>
    </alternativeName>
    <alternativeName>
        <fullName evidence="1">Dethiobiotin synthase</fullName>
    </alternativeName>
</protein>